<protein>
    <recommendedName>
        <fullName evidence="4">Transcription factor ORF10</fullName>
    </recommendedName>
    <alternativeName>
        <fullName evidence="4">PR-toxin biosynthesis cluster protein 10</fullName>
    </alternativeName>
</protein>
<gene>
    <name evidence="4" type="primary">ORF10</name>
    <name type="ORF">PROQFM164_S02g001474</name>
</gene>
<reference key="1">
    <citation type="journal article" date="2014" name="Nat. Commun.">
        <title>Multiple recent horizontal transfers of a large genomic region in cheese making fungi.</title>
        <authorList>
            <person name="Cheeseman K."/>
            <person name="Ropars J."/>
            <person name="Renault P."/>
            <person name="Dupont J."/>
            <person name="Gouzy J."/>
            <person name="Branca A."/>
            <person name="Abraham A.-L."/>
            <person name="Ceppi M."/>
            <person name="Conseiller E."/>
            <person name="Debuchy R."/>
            <person name="Malagnac F."/>
            <person name="Goarin A."/>
            <person name="Silar P."/>
            <person name="Lacoste S."/>
            <person name="Sallet E."/>
            <person name="Bensimon A."/>
            <person name="Giraud T."/>
            <person name="Brygoo Y."/>
        </authorList>
    </citation>
    <scope>NUCLEOTIDE SEQUENCE [LARGE SCALE GENOMIC DNA]</scope>
    <source>
        <strain>FM164</strain>
    </source>
</reference>
<reference key="2">
    <citation type="journal article" date="2017" name="Appl. Microbiol. Biotechnol.">
        <title>Penicillium roqueforti PR toxin gene cluster characterization.</title>
        <authorList>
            <person name="Hidalgo P.I."/>
            <person name="Poirier E."/>
            <person name="Ullan R.V."/>
            <person name="Piqueras J."/>
            <person name="Meslet-Cladiere L."/>
            <person name="Coton E."/>
            <person name="Coton M."/>
        </authorList>
    </citation>
    <scope>FUNCTION</scope>
</reference>
<sequence length="458" mass="49795">MFGTLRIGSEKNSVEFIEHAKGEAASRLGGYVFSHSACESCRLKKLRCSGHKSGCDRCRSQAMKCSYQIGAPSNSSRPKSRSHFQPNFSNMSGTAGTSKAPSPLGNDGVDREIGGWEMAETDPTGSVVTTTAQFLNSVNQGEHSNLNDLRQGQRFGGELDYSENELNDIFSNIAYLQPDDMETNVFVGAANRAVLDAEAFDSMTEPANSMSDDIGDIAASQPPSADVQSAFMAFDHARTSSSSSSHQSSDTSASDAFIATDFDGARSRTDPSTCQCRGSILRVLAEIESNILSASPSNMYAILSYLRQTTAASNDILTCRICNCRLKFFGLLGIIGEKITSLSGAIITAFVCRLKEQNESVDFGKSDSPDKRLDPNRAIQLCEFQVQSLQEFKVVSAAVIKLQLKYSVAFVSRTRELAISMNHLAQAQSLEKLESRLNELVIKMQRMVSEVDSDLCDI</sequence>
<accession>W6QB19</accession>
<evidence type="ECO:0000255" key="1">
    <source>
        <dbReference type="PROSITE-ProRule" id="PRU00227"/>
    </source>
</evidence>
<evidence type="ECO:0000256" key="2">
    <source>
        <dbReference type="SAM" id="MobiDB-lite"/>
    </source>
</evidence>
<evidence type="ECO:0000269" key="3">
    <source>
    </source>
</evidence>
<evidence type="ECO:0000303" key="4">
    <source>
    </source>
</evidence>
<name>ORF10_PENRF</name>
<proteinExistence type="inferred from homology"/>
<comment type="function">
    <text evidence="3">Transcription factor that specifically regulates the expression of the gene cluster that mediates the biosynthesis of PR-toxin, a bicyclic sesquiterpene belonging to the eremophilane class and acting as a mycotoxin.</text>
</comment>
<comment type="subcellular location">
    <subcellularLocation>
        <location evidence="1">Nucleus</location>
    </subcellularLocation>
</comment>
<keyword id="KW-0238">DNA-binding</keyword>
<keyword id="KW-0479">Metal-binding</keyword>
<keyword id="KW-0539">Nucleus</keyword>
<keyword id="KW-1185">Reference proteome</keyword>
<keyword id="KW-0804">Transcription</keyword>
<keyword id="KW-0805">Transcription regulation</keyword>
<keyword id="KW-0862">Zinc</keyword>
<organism>
    <name type="scientific">Penicillium roqueforti (strain FM164)</name>
    <dbReference type="NCBI Taxonomy" id="1365484"/>
    <lineage>
        <taxon>Eukaryota</taxon>
        <taxon>Fungi</taxon>
        <taxon>Dikarya</taxon>
        <taxon>Ascomycota</taxon>
        <taxon>Pezizomycotina</taxon>
        <taxon>Eurotiomycetes</taxon>
        <taxon>Eurotiomycetidae</taxon>
        <taxon>Eurotiales</taxon>
        <taxon>Aspergillaceae</taxon>
        <taxon>Penicillium</taxon>
    </lineage>
</organism>
<feature type="chain" id="PRO_0000451233" description="Transcription factor ORF10">
    <location>
        <begin position="1"/>
        <end position="458"/>
    </location>
</feature>
<feature type="DNA-binding region" description="Zn(2)-C6 fungal-type" evidence="1">
    <location>
        <begin position="38"/>
        <end position="65"/>
    </location>
</feature>
<feature type="region of interest" description="Disordered" evidence="2">
    <location>
        <begin position="69"/>
        <end position="109"/>
    </location>
</feature>
<feature type="compositionally biased region" description="Polar residues" evidence="2">
    <location>
        <begin position="71"/>
        <end position="100"/>
    </location>
</feature>
<dbReference type="EMBL" id="HG792016">
    <property type="protein sequence ID" value="CDM31324.1"/>
    <property type="molecule type" value="Genomic_DNA"/>
</dbReference>
<dbReference type="SMR" id="W6QB19"/>
<dbReference type="STRING" id="1365484.W6QB19"/>
<dbReference type="OMA" id="FSHSACE"/>
<dbReference type="OrthoDB" id="2740448at2759"/>
<dbReference type="Proteomes" id="UP000030686">
    <property type="component" value="Unassembled WGS sequence"/>
</dbReference>
<dbReference type="GO" id="GO:0005634">
    <property type="term" value="C:nucleus"/>
    <property type="evidence" value="ECO:0007669"/>
    <property type="project" value="UniProtKB-SubCell"/>
</dbReference>
<dbReference type="GO" id="GO:0003677">
    <property type="term" value="F:DNA binding"/>
    <property type="evidence" value="ECO:0007669"/>
    <property type="project" value="UniProtKB-KW"/>
</dbReference>
<dbReference type="GO" id="GO:0000981">
    <property type="term" value="F:DNA-binding transcription factor activity, RNA polymerase II-specific"/>
    <property type="evidence" value="ECO:0007669"/>
    <property type="project" value="InterPro"/>
</dbReference>
<dbReference type="GO" id="GO:0008270">
    <property type="term" value="F:zinc ion binding"/>
    <property type="evidence" value="ECO:0007669"/>
    <property type="project" value="InterPro"/>
</dbReference>
<dbReference type="CDD" id="cd00067">
    <property type="entry name" value="GAL4"/>
    <property type="match status" value="1"/>
</dbReference>
<dbReference type="Gene3D" id="4.10.240.10">
    <property type="entry name" value="Zn(2)-C6 fungal-type DNA-binding domain"/>
    <property type="match status" value="1"/>
</dbReference>
<dbReference type="InterPro" id="IPR036864">
    <property type="entry name" value="Zn2-C6_fun-type_DNA-bd_sf"/>
</dbReference>
<dbReference type="InterPro" id="IPR001138">
    <property type="entry name" value="Zn2Cys6_DnaBD"/>
</dbReference>
<dbReference type="Pfam" id="PF00172">
    <property type="entry name" value="Zn_clus"/>
    <property type="match status" value="1"/>
</dbReference>
<dbReference type="SUPFAM" id="SSF57701">
    <property type="entry name" value="Zn2/Cys6 DNA-binding domain"/>
    <property type="match status" value="1"/>
</dbReference>
<dbReference type="PROSITE" id="PS00463">
    <property type="entry name" value="ZN2_CY6_FUNGAL_1"/>
    <property type="match status" value="1"/>
</dbReference>
<dbReference type="PROSITE" id="PS50048">
    <property type="entry name" value="ZN2_CY6_FUNGAL_2"/>
    <property type="match status" value="1"/>
</dbReference>